<name>SYC_SALCH</name>
<accession>Q57S29</accession>
<proteinExistence type="inferred from homology"/>
<comment type="catalytic activity">
    <reaction evidence="1">
        <text>tRNA(Cys) + L-cysteine + ATP = L-cysteinyl-tRNA(Cys) + AMP + diphosphate</text>
        <dbReference type="Rhea" id="RHEA:17773"/>
        <dbReference type="Rhea" id="RHEA-COMP:9661"/>
        <dbReference type="Rhea" id="RHEA-COMP:9679"/>
        <dbReference type="ChEBI" id="CHEBI:30616"/>
        <dbReference type="ChEBI" id="CHEBI:33019"/>
        <dbReference type="ChEBI" id="CHEBI:35235"/>
        <dbReference type="ChEBI" id="CHEBI:78442"/>
        <dbReference type="ChEBI" id="CHEBI:78517"/>
        <dbReference type="ChEBI" id="CHEBI:456215"/>
        <dbReference type="EC" id="6.1.1.16"/>
    </reaction>
</comment>
<comment type="cofactor">
    <cofactor evidence="1">
        <name>Zn(2+)</name>
        <dbReference type="ChEBI" id="CHEBI:29105"/>
    </cofactor>
    <text evidence="1">Binds 1 zinc ion per subunit.</text>
</comment>
<comment type="subunit">
    <text evidence="1">Monomer.</text>
</comment>
<comment type="subcellular location">
    <subcellularLocation>
        <location evidence="1">Cytoplasm</location>
    </subcellularLocation>
</comment>
<comment type="similarity">
    <text evidence="1">Belongs to the class-I aminoacyl-tRNA synthetase family.</text>
</comment>
<evidence type="ECO:0000255" key="1">
    <source>
        <dbReference type="HAMAP-Rule" id="MF_00041"/>
    </source>
</evidence>
<sequence>MLKIFNTLTRQKEEFKPIHAGEVGMYVCGITVYDLCHIGHGRTFVAFDVVARYLRFLGYKLKYVRNITDIDDKIIKRANENGESFVALVDRMIAEMHQDFDALNILRPDSEPRATHHIQEIIELTRTLIEKGHAYVADNGDVMFDVPTDPTYGQLSRQDLEQLQAGARVDVVDVKRNPMDFVLWKMSKEGEPSWPSPWGEGRPGWHIECSAMNCKQLGNHFDIHGGGSDLMFPHHENEIAQSTCAHDGEYVNYWMHSGMVMVDREKMSKSLGNFFTVRDVLKYYDAETVRYFLMSGHYRSQLNYSEENLKQARASLERLYTALRGTDKSAAPAGGEAFEARFVEAMNDDFNTPEAYSVLFDMAREVNRLKGEDMTAANAMASHLRKISGVLGLLEQEPDVFLQSGAQADDGEVAEIEALIQQRLDARKAKDWAAADAARDRLAEMGIILEDGPQGTTWRRK</sequence>
<dbReference type="EC" id="6.1.1.16" evidence="1"/>
<dbReference type="EMBL" id="AE017220">
    <property type="protein sequence ID" value="AAX64482.1"/>
    <property type="molecule type" value="Genomic_DNA"/>
</dbReference>
<dbReference type="RefSeq" id="WP_000912376.1">
    <property type="nucleotide sequence ID" value="NC_006905.1"/>
</dbReference>
<dbReference type="SMR" id="Q57S29"/>
<dbReference type="KEGG" id="sec:SCH_0576"/>
<dbReference type="HOGENOM" id="CLU_013528_0_1_6"/>
<dbReference type="Proteomes" id="UP000000538">
    <property type="component" value="Chromosome"/>
</dbReference>
<dbReference type="GO" id="GO:0005829">
    <property type="term" value="C:cytosol"/>
    <property type="evidence" value="ECO:0007669"/>
    <property type="project" value="TreeGrafter"/>
</dbReference>
<dbReference type="GO" id="GO:0005524">
    <property type="term" value="F:ATP binding"/>
    <property type="evidence" value="ECO:0007669"/>
    <property type="project" value="UniProtKB-UniRule"/>
</dbReference>
<dbReference type="GO" id="GO:0004817">
    <property type="term" value="F:cysteine-tRNA ligase activity"/>
    <property type="evidence" value="ECO:0007669"/>
    <property type="project" value="UniProtKB-UniRule"/>
</dbReference>
<dbReference type="GO" id="GO:0008270">
    <property type="term" value="F:zinc ion binding"/>
    <property type="evidence" value="ECO:0007669"/>
    <property type="project" value="UniProtKB-UniRule"/>
</dbReference>
<dbReference type="GO" id="GO:0006423">
    <property type="term" value="P:cysteinyl-tRNA aminoacylation"/>
    <property type="evidence" value="ECO:0007669"/>
    <property type="project" value="UniProtKB-UniRule"/>
</dbReference>
<dbReference type="CDD" id="cd07963">
    <property type="entry name" value="Anticodon_Ia_Cys"/>
    <property type="match status" value="1"/>
</dbReference>
<dbReference type="CDD" id="cd00672">
    <property type="entry name" value="CysRS_core"/>
    <property type="match status" value="1"/>
</dbReference>
<dbReference type="FunFam" id="1.20.120.1910:FF:000001">
    <property type="entry name" value="Cysteine--tRNA ligase"/>
    <property type="match status" value="1"/>
</dbReference>
<dbReference type="FunFam" id="3.40.50.620:FF:000009">
    <property type="entry name" value="Cysteine--tRNA ligase"/>
    <property type="match status" value="1"/>
</dbReference>
<dbReference type="Gene3D" id="1.20.120.1910">
    <property type="entry name" value="Cysteine-tRNA ligase, C-terminal anti-codon recognition domain"/>
    <property type="match status" value="1"/>
</dbReference>
<dbReference type="Gene3D" id="3.40.50.620">
    <property type="entry name" value="HUPs"/>
    <property type="match status" value="1"/>
</dbReference>
<dbReference type="HAMAP" id="MF_00041">
    <property type="entry name" value="Cys_tRNA_synth"/>
    <property type="match status" value="1"/>
</dbReference>
<dbReference type="InterPro" id="IPR015803">
    <property type="entry name" value="Cys-tRNA-ligase"/>
</dbReference>
<dbReference type="InterPro" id="IPR015273">
    <property type="entry name" value="Cys-tRNA-synt_Ia_DALR"/>
</dbReference>
<dbReference type="InterPro" id="IPR024909">
    <property type="entry name" value="Cys-tRNA/MSH_ligase"/>
</dbReference>
<dbReference type="InterPro" id="IPR056411">
    <property type="entry name" value="CysS_C"/>
</dbReference>
<dbReference type="InterPro" id="IPR014729">
    <property type="entry name" value="Rossmann-like_a/b/a_fold"/>
</dbReference>
<dbReference type="InterPro" id="IPR032678">
    <property type="entry name" value="tRNA-synt_1_cat_dom"/>
</dbReference>
<dbReference type="InterPro" id="IPR009080">
    <property type="entry name" value="tRNAsynth_Ia_anticodon-bd"/>
</dbReference>
<dbReference type="NCBIfam" id="TIGR00435">
    <property type="entry name" value="cysS"/>
    <property type="match status" value="1"/>
</dbReference>
<dbReference type="PANTHER" id="PTHR10890:SF3">
    <property type="entry name" value="CYSTEINE--TRNA LIGASE, CYTOPLASMIC"/>
    <property type="match status" value="1"/>
</dbReference>
<dbReference type="PANTHER" id="PTHR10890">
    <property type="entry name" value="CYSTEINYL-TRNA SYNTHETASE"/>
    <property type="match status" value="1"/>
</dbReference>
<dbReference type="Pfam" id="PF23493">
    <property type="entry name" value="CysS_C"/>
    <property type="match status" value="1"/>
</dbReference>
<dbReference type="Pfam" id="PF09190">
    <property type="entry name" value="DALR_2"/>
    <property type="match status" value="1"/>
</dbReference>
<dbReference type="Pfam" id="PF01406">
    <property type="entry name" value="tRNA-synt_1e"/>
    <property type="match status" value="1"/>
</dbReference>
<dbReference type="PRINTS" id="PR00983">
    <property type="entry name" value="TRNASYNTHCYS"/>
</dbReference>
<dbReference type="SMART" id="SM00840">
    <property type="entry name" value="DALR_2"/>
    <property type="match status" value="1"/>
</dbReference>
<dbReference type="SUPFAM" id="SSF47323">
    <property type="entry name" value="Anticodon-binding domain of a subclass of class I aminoacyl-tRNA synthetases"/>
    <property type="match status" value="1"/>
</dbReference>
<dbReference type="SUPFAM" id="SSF52374">
    <property type="entry name" value="Nucleotidylyl transferase"/>
    <property type="match status" value="1"/>
</dbReference>
<keyword id="KW-0030">Aminoacyl-tRNA synthetase</keyword>
<keyword id="KW-0067">ATP-binding</keyword>
<keyword id="KW-0963">Cytoplasm</keyword>
<keyword id="KW-0436">Ligase</keyword>
<keyword id="KW-0479">Metal-binding</keyword>
<keyword id="KW-0547">Nucleotide-binding</keyword>
<keyword id="KW-0648">Protein biosynthesis</keyword>
<keyword id="KW-0862">Zinc</keyword>
<feature type="chain" id="PRO_0000240953" description="Cysteine--tRNA ligase">
    <location>
        <begin position="1"/>
        <end position="461"/>
    </location>
</feature>
<feature type="short sequence motif" description="'HIGH' region">
    <location>
        <begin position="30"/>
        <end position="40"/>
    </location>
</feature>
<feature type="short sequence motif" description="'KMSKS' region">
    <location>
        <begin position="266"/>
        <end position="270"/>
    </location>
</feature>
<feature type="binding site" evidence="1">
    <location>
        <position position="28"/>
    </location>
    <ligand>
        <name>Zn(2+)</name>
        <dbReference type="ChEBI" id="CHEBI:29105"/>
    </ligand>
</feature>
<feature type="binding site" evidence="1">
    <location>
        <position position="209"/>
    </location>
    <ligand>
        <name>Zn(2+)</name>
        <dbReference type="ChEBI" id="CHEBI:29105"/>
    </ligand>
</feature>
<feature type="binding site" evidence="1">
    <location>
        <position position="234"/>
    </location>
    <ligand>
        <name>Zn(2+)</name>
        <dbReference type="ChEBI" id="CHEBI:29105"/>
    </ligand>
</feature>
<feature type="binding site" evidence="1">
    <location>
        <position position="238"/>
    </location>
    <ligand>
        <name>Zn(2+)</name>
        <dbReference type="ChEBI" id="CHEBI:29105"/>
    </ligand>
</feature>
<feature type="binding site" evidence="1">
    <location>
        <position position="269"/>
    </location>
    <ligand>
        <name>ATP</name>
        <dbReference type="ChEBI" id="CHEBI:30616"/>
    </ligand>
</feature>
<reference key="1">
    <citation type="journal article" date="2005" name="Nucleic Acids Res.">
        <title>The genome sequence of Salmonella enterica serovar Choleraesuis, a highly invasive and resistant zoonotic pathogen.</title>
        <authorList>
            <person name="Chiu C.-H."/>
            <person name="Tang P."/>
            <person name="Chu C."/>
            <person name="Hu S."/>
            <person name="Bao Q."/>
            <person name="Yu J."/>
            <person name="Chou Y.-Y."/>
            <person name="Wang H.-S."/>
            <person name="Lee Y.-S."/>
        </authorList>
    </citation>
    <scope>NUCLEOTIDE SEQUENCE [LARGE SCALE GENOMIC DNA]</scope>
    <source>
        <strain>SC-B67</strain>
    </source>
</reference>
<protein>
    <recommendedName>
        <fullName evidence="1">Cysteine--tRNA ligase</fullName>
        <ecNumber evidence="1">6.1.1.16</ecNumber>
    </recommendedName>
    <alternativeName>
        <fullName evidence="1">Cysteinyl-tRNA synthetase</fullName>
        <shortName evidence="1">CysRS</shortName>
    </alternativeName>
</protein>
<organism>
    <name type="scientific">Salmonella choleraesuis (strain SC-B67)</name>
    <dbReference type="NCBI Taxonomy" id="321314"/>
    <lineage>
        <taxon>Bacteria</taxon>
        <taxon>Pseudomonadati</taxon>
        <taxon>Pseudomonadota</taxon>
        <taxon>Gammaproteobacteria</taxon>
        <taxon>Enterobacterales</taxon>
        <taxon>Enterobacteriaceae</taxon>
        <taxon>Salmonella</taxon>
    </lineage>
</organism>
<gene>
    <name evidence="1" type="primary">cysS</name>
    <name type="ordered locus">SCH_0576</name>
</gene>